<proteinExistence type="inferred from homology"/>
<keyword id="KW-0131">Cell cycle</keyword>
<keyword id="KW-0132">Cell division</keyword>
<reference key="1">
    <citation type="submission" date="2008-01" db="EMBL/GenBank/DDBJ databases">
        <title>Complete sequence of Pseudomonas putida GB-1.</title>
        <authorList>
            <consortium name="US DOE Joint Genome Institute"/>
            <person name="Copeland A."/>
            <person name="Lucas S."/>
            <person name="Lapidus A."/>
            <person name="Barry K."/>
            <person name="Glavina del Rio T."/>
            <person name="Dalin E."/>
            <person name="Tice H."/>
            <person name="Pitluck S."/>
            <person name="Bruce D."/>
            <person name="Goodwin L."/>
            <person name="Chertkov O."/>
            <person name="Brettin T."/>
            <person name="Detter J.C."/>
            <person name="Han C."/>
            <person name="Kuske C.R."/>
            <person name="Schmutz J."/>
            <person name="Larimer F."/>
            <person name="Land M."/>
            <person name="Hauser L."/>
            <person name="Kyrpides N."/>
            <person name="Kim E."/>
            <person name="McCarthy J.K."/>
            <person name="Richardson P."/>
        </authorList>
    </citation>
    <scope>NUCLEOTIDE SEQUENCE [LARGE SCALE GENOMIC DNA]</scope>
    <source>
        <strain>GB-1</strain>
    </source>
</reference>
<gene>
    <name evidence="1" type="primary">minE</name>
    <name type="ordered locus">PputGB1_1324</name>
</gene>
<feature type="chain" id="PRO_1000078642" description="Cell division topological specificity factor">
    <location>
        <begin position="1"/>
        <end position="84"/>
    </location>
</feature>
<protein>
    <recommendedName>
        <fullName evidence="1">Cell division topological specificity factor</fullName>
    </recommendedName>
</protein>
<evidence type="ECO:0000255" key="1">
    <source>
        <dbReference type="HAMAP-Rule" id="MF_00262"/>
    </source>
</evidence>
<accession>B0KTU2</accession>
<dbReference type="EMBL" id="CP000926">
    <property type="protein sequence ID" value="ABY97231.1"/>
    <property type="molecule type" value="Genomic_DNA"/>
</dbReference>
<dbReference type="RefSeq" id="WP_003252572.1">
    <property type="nucleotide sequence ID" value="NC_010322.1"/>
</dbReference>
<dbReference type="SMR" id="B0KTU2"/>
<dbReference type="GeneID" id="97166789"/>
<dbReference type="KEGG" id="ppg:PputGB1_1324"/>
<dbReference type="eggNOG" id="COG0851">
    <property type="taxonomic scope" value="Bacteria"/>
</dbReference>
<dbReference type="HOGENOM" id="CLU_137929_2_1_6"/>
<dbReference type="Proteomes" id="UP000002157">
    <property type="component" value="Chromosome"/>
</dbReference>
<dbReference type="GO" id="GO:0051301">
    <property type="term" value="P:cell division"/>
    <property type="evidence" value="ECO:0007669"/>
    <property type="project" value="UniProtKB-KW"/>
</dbReference>
<dbReference type="GO" id="GO:0032955">
    <property type="term" value="P:regulation of division septum assembly"/>
    <property type="evidence" value="ECO:0007669"/>
    <property type="project" value="InterPro"/>
</dbReference>
<dbReference type="FunFam" id="3.30.1070.10:FF:000001">
    <property type="entry name" value="Cell division topological specificity factor"/>
    <property type="match status" value="1"/>
</dbReference>
<dbReference type="Gene3D" id="3.30.1070.10">
    <property type="entry name" value="Cell division topological specificity factor MinE"/>
    <property type="match status" value="1"/>
</dbReference>
<dbReference type="HAMAP" id="MF_00262">
    <property type="entry name" value="MinE"/>
    <property type="match status" value="1"/>
</dbReference>
<dbReference type="InterPro" id="IPR005527">
    <property type="entry name" value="MinE"/>
</dbReference>
<dbReference type="InterPro" id="IPR036707">
    <property type="entry name" value="MinE_sf"/>
</dbReference>
<dbReference type="NCBIfam" id="TIGR01215">
    <property type="entry name" value="minE"/>
    <property type="match status" value="1"/>
</dbReference>
<dbReference type="NCBIfam" id="NF001422">
    <property type="entry name" value="PRK00296.1"/>
    <property type="match status" value="1"/>
</dbReference>
<dbReference type="NCBIfam" id="NF010595">
    <property type="entry name" value="PRK13989.1"/>
    <property type="match status" value="1"/>
</dbReference>
<dbReference type="Pfam" id="PF03776">
    <property type="entry name" value="MinE"/>
    <property type="match status" value="1"/>
</dbReference>
<dbReference type="SUPFAM" id="SSF55229">
    <property type="entry name" value="Cell division protein MinE topological specificity domain"/>
    <property type="match status" value="1"/>
</dbReference>
<name>MINE_PSEPG</name>
<organism>
    <name type="scientific">Pseudomonas putida (strain GB-1)</name>
    <dbReference type="NCBI Taxonomy" id="76869"/>
    <lineage>
        <taxon>Bacteria</taxon>
        <taxon>Pseudomonadati</taxon>
        <taxon>Pseudomonadota</taxon>
        <taxon>Gammaproteobacteria</taxon>
        <taxon>Pseudomonadales</taxon>
        <taxon>Pseudomonadaceae</taxon>
        <taxon>Pseudomonas</taxon>
    </lineage>
</organism>
<sequence length="84" mass="9709">MNLFDFFRGRQKQTSASVAKERLQIIVAHERGQRSEPDYLPALQKELLEVIRKYVNIGNDDVHIELENQGSCSILELNITLPDR</sequence>
<comment type="function">
    <text evidence="1">Prevents the cell division inhibition by proteins MinC and MinD at internal division sites while permitting inhibition at polar sites. This ensures cell division at the proper site by restricting the formation of a division septum at the midpoint of the long axis of the cell.</text>
</comment>
<comment type="similarity">
    <text evidence="1">Belongs to the MinE family.</text>
</comment>